<reference key="1">
    <citation type="journal article" date="1996" name="Gene">
        <title>Cloning and nucleotide sequence of a flagellin encoding genetic locus from Xenorhabdus nematophilus: phase variation leads to differential transcription of two flagellar genes (fliCD).</title>
        <authorList>
            <person name="Givaudan A."/>
            <person name="Lanois A."/>
            <person name="Boemare N."/>
        </authorList>
    </citation>
    <scope>NUCLEOTIDE SEQUENCE [GENOMIC DNA]</scope>
    <source>
        <strain>F1</strain>
    </source>
</reference>
<reference key="2">
    <citation type="submission" date="1998-12" db="EMBL/GenBank/DDBJ databases">
        <authorList>
            <person name="Lanois A."/>
            <person name="Givaudan A."/>
        </authorList>
    </citation>
    <scope>NUCLEOTIDE SEQUENCE [GENOMIC DNA] OF 233-313</scope>
    <source>
        <strain>F1</strain>
    </source>
</reference>
<name>FLIC_XENNE</name>
<organism>
    <name type="scientific">Xenorhabdus nematophila</name>
    <name type="common">Achromobacter nematophilus</name>
    <dbReference type="NCBI Taxonomy" id="628"/>
    <lineage>
        <taxon>Bacteria</taxon>
        <taxon>Pseudomonadati</taxon>
        <taxon>Pseudomonadota</taxon>
        <taxon>Gammaproteobacteria</taxon>
        <taxon>Enterobacterales</taxon>
        <taxon>Morganellaceae</taxon>
        <taxon>Xenorhabdus</taxon>
    </lineage>
</organism>
<evidence type="ECO:0000255" key="1"/>
<evidence type="ECO:0000256" key="2">
    <source>
        <dbReference type="SAM" id="MobiDB-lite"/>
    </source>
</evidence>
<evidence type="ECO:0000305" key="3"/>
<dbReference type="EMBL" id="X91047">
    <property type="protein sequence ID" value="CAA62509.1"/>
    <property type="molecule type" value="Genomic_DNA"/>
</dbReference>
<dbReference type="EMBL" id="AJ131736">
    <property type="protein sequence ID" value="CAB46359.1"/>
    <property type="molecule type" value="Genomic_DNA"/>
</dbReference>
<dbReference type="PIR" id="JC5754">
    <property type="entry name" value="JC5754"/>
</dbReference>
<dbReference type="RefSeq" id="WP_010848065.1">
    <property type="nucleotide sequence ID" value="NZ_WUUN01000004.1"/>
</dbReference>
<dbReference type="SMR" id="Q56826"/>
<dbReference type="GO" id="GO:0009288">
    <property type="term" value="C:bacterial-type flagellum"/>
    <property type="evidence" value="ECO:0007669"/>
    <property type="project" value="UniProtKB-SubCell"/>
</dbReference>
<dbReference type="GO" id="GO:0005576">
    <property type="term" value="C:extracellular region"/>
    <property type="evidence" value="ECO:0007669"/>
    <property type="project" value="UniProtKB-SubCell"/>
</dbReference>
<dbReference type="GO" id="GO:0005198">
    <property type="term" value="F:structural molecule activity"/>
    <property type="evidence" value="ECO:0007669"/>
    <property type="project" value="InterPro"/>
</dbReference>
<dbReference type="Gene3D" id="6.10.280.190">
    <property type="match status" value="1"/>
</dbReference>
<dbReference type="Gene3D" id="1.20.1330.10">
    <property type="entry name" value="f41 fragment of flagellin, N-terminal domain"/>
    <property type="match status" value="1"/>
</dbReference>
<dbReference type="Gene3D" id="6.10.10.10">
    <property type="entry name" value="Flagellar export chaperone, C-terminal domain"/>
    <property type="match status" value="1"/>
</dbReference>
<dbReference type="InterPro" id="IPR001492">
    <property type="entry name" value="Flagellin"/>
</dbReference>
<dbReference type="InterPro" id="IPR046358">
    <property type="entry name" value="Flagellin_C"/>
</dbReference>
<dbReference type="InterPro" id="IPR042187">
    <property type="entry name" value="Flagellin_C_sub2"/>
</dbReference>
<dbReference type="InterPro" id="IPR001029">
    <property type="entry name" value="Flagellin_N"/>
</dbReference>
<dbReference type="PANTHER" id="PTHR42792">
    <property type="entry name" value="FLAGELLIN"/>
    <property type="match status" value="1"/>
</dbReference>
<dbReference type="PANTHER" id="PTHR42792:SF2">
    <property type="entry name" value="FLAGELLIN"/>
    <property type="match status" value="1"/>
</dbReference>
<dbReference type="Pfam" id="PF00700">
    <property type="entry name" value="Flagellin_C"/>
    <property type="match status" value="1"/>
</dbReference>
<dbReference type="Pfam" id="PF00669">
    <property type="entry name" value="Flagellin_N"/>
    <property type="match status" value="1"/>
</dbReference>
<dbReference type="PRINTS" id="PR00207">
    <property type="entry name" value="FLAGELLIN"/>
</dbReference>
<dbReference type="SUPFAM" id="SSF64518">
    <property type="entry name" value="Phase 1 flagellin"/>
    <property type="match status" value="1"/>
</dbReference>
<feature type="chain" id="PRO_0000182659" description="Flagellin">
    <location>
        <begin position="1"/>
        <end position="313"/>
    </location>
</feature>
<feature type="repeat" description="1-1">
    <location>
        <begin position="179"/>
        <end position="197"/>
    </location>
</feature>
<feature type="repeat" description="1-2">
    <location>
        <begin position="199"/>
        <end position="217"/>
    </location>
</feature>
<feature type="repeat" description="2-1">
    <location>
        <begin position="255"/>
        <end position="259"/>
    </location>
</feature>
<feature type="repeat" description="2-2">
    <location>
        <begin position="262"/>
        <end position="266"/>
    </location>
</feature>
<feature type="region of interest" description="2 X 19 AA approximate tandem repeats">
    <location>
        <begin position="179"/>
        <end position="217"/>
    </location>
</feature>
<feature type="region of interest" description="Disordered" evidence="2">
    <location>
        <begin position="190"/>
        <end position="211"/>
    </location>
</feature>
<feature type="region of interest" description="2 X 5 AA approximate repeats of V-N-N-L-N">
    <location>
        <begin position="255"/>
        <end position="266"/>
    </location>
</feature>
<feature type="coiled-coil region" evidence="1">
    <location>
        <begin position="5"/>
        <end position="33"/>
    </location>
</feature>
<feature type="coiled-coil region" evidence="1">
    <location>
        <begin position="97"/>
        <end position="117"/>
    </location>
</feature>
<feature type="coiled-coil region" evidence="1">
    <location>
        <begin position="252"/>
        <end position="298"/>
    </location>
</feature>
<feature type="compositionally biased region" description="Low complexity" evidence="2">
    <location>
        <begin position="190"/>
        <end position="199"/>
    </location>
</feature>
<gene>
    <name type="primary">fliC</name>
</gene>
<accession>Q56826</accession>
<accession>Q9S1E2</accession>
<keyword id="KW-0975">Bacterial flagellum</keyword>
<keyword id="KW-0175">Coiled coil</keyword>
<keyword id="KW-0677">Repeat</keyword>
<keyword id="KW-0964">Secreted</keyword>
<comment type="function">
    <text>Flagellin is the subunit protein which polymerizes to form the filaments of bacterial flagella.</text>
</comment>
<comment type="subcellular location">
    <subcellularLocation>
        <location>Secreted</location>
    </subcellularLocation>
    <subcellularLocation>
        <location>Bacterial flagellum</location>
    </subcellularLocation>
</comment>
<comment type="miscellaneous">
    <text>Xenorhabdus strains undergo spontaneous variations involving a large number of phenotypes. Phase 1 variants were motile, whereas phase 2 variants were non-flagellated cells which did not synthesize flagellin. Effectively, the fliC gene is not transcribed in phase 2 variants.</text>
</comment>
<comment type="similarity">
    <text evidence="3">Belongs to the bacterial flagellin family.</text>
</comment>
<sequence>MASVINTNDSALLAQNNLTKSKGILGSAIERLSSGLRINSAKDDAAGQAIANRFTANVKGLTQAARNANDGISIAQTTEGALNEINNNLQRIRELTVQSENGSNSKSDLDSIQKEVTQRLEEIDRISTQTQFNGIKVLNGDVTEMKIQVGANDNETIGIKLGKINSEKLNLKEFSVVEKEAVAAKPAVPAQPAVPADPKNGVAAKPAVPAQPEVKAQEAVKKTDNPLDTLDKALAQVDDMRSSLGAVQNRLESTVNNLNNTVNNLSAARSRIEDADYAVEVSNMSRGQILQQAGTSVLAQANQVPQTVLSLLR</sequence>
<proteinExistence type="inferred from homology"/>
<protein>
    <recommendedName>
        <fullName>Flagellin</fullName>
    </recommendedName>
</protein>